<feature type="signal peptide" evidence="2">
    <location>
        <begin position="1"/>
        <end position="28"/>
    </location>
</feature>
<feature type="chain" id="PRO_0000367388" description="GDSL esterase/lipase At2g40250">
    <location>
        <begin position="29"/>
        <end position="361"/>
    </location>
</feature>
<feature type="active site" description="Nucleophile" evidence="1">
    <location>
        <position position="43"/>
    </location>
</feature>
<feature type="active site" evidence="1">
    <location>
        <position position="337"/>
    </location>
</feature>
<feature type="active site" evidence="1">
    <location>
        <position position="340"/>
    </location>
</feature>
<gene>
    <name type="ordered locus">At2g40250</name>
    <name type="ORF">T07M07.13</name>
    <name type="ORF">T3G21</name>
</gene>
<keyword id="KW-0378">Hydrolase</keyword>
<keyword id="KW-0442">Lipid degradation</keyword>
<keyword id="KW-0443">Lipid metabolism</keyword>
<keyword id="KW-1185">Reference proteome</keyword>
<keyword id="KW-0964">Secreted</keyword>
<keyword id="KW-0732">Signal</keyword>
<sequence>MNRNQHKPMFVTFLINILLLQLLNLTNASPSPPITALYAFGDSTVDSGNNNYIPTLFQSNHPPYGKSFPSKLSTGRFSDGKLATDFIVSSLGLKPTLPAYLNPSVKPVDLLTGVSFASAGGGLDDRTAKSSLTITMDKQWSYFEEALGKMKSLVGDSETNRVIKNAVFVISAGTNDMIFNVYDHVLGSLISVSDYQDSLLTKVEVFVQRLYEAGARRITIAGLPPIGCLPVQVTLTSINTPRIFHHRICTEHQNDDSRVYNQKLQKLIFGLSQRFRGSKVLYLDIYSPLIDMIKHPRKYGLEETLRGCCGTGLLEAGPLCQPLSRTCDDVSKYLFFDSVHPSQTAYSVIASFALQKLFPLL</sequence>
<comment type="subcellular location">
    <subcellularLocation>
        <location evidence="3">Secreted</location>
    </subcellularLocation>
</comment>
<comment type="similarity">
    <text evidence="3">Belongs to the 'GDSL' lipolytic enzyme family.</text>
</comment>
<comment type="sequence caution" evidence="3">
    <conflict type="erroneous initiation">
        <sequence resource="EMBL-CDS" id="AAD25940"/>
    </conflict>
</comment>
<proteinExistence type="evidence at transcript level"/>
<organism>
    <name type="scientific">Arabidopsis thaliana</name>
    <name type="common">Mouse-ear cress</name>
    <dbReference type="NCBI Taxonomy" id="3702"/>
    <lineage>
        <taxon>Eukaryota</taxon>
        <taxon>Viridiplantae</taxon>
        <taxon>Streptophyta</taxon>
        <taxon>Embryophyta</taxon>
        <taxon>Tracheophyta</taxon>
        <taxon>Spermatophyta</taxon>
        <taxon>Magnoliopsida</taxon>
        <taxon>eudicotyledons</taxon>
        <taxon>Gunneridae</taxon>
        <taxon>Pentapetalae</taxon>
        <taxon>rosids</taxon>
        <taxon>malvids</taxon>
        <taxon>Brassicales</taxon>
        <taxon>Brassicaceae</taxon>
        <taxon>Camelineae</taxon>
        <taxon>Arabidopsis</taxon>
    </lineage>
</organism>
<dbReference type="EC" id="3.1.1.-"/>
<dbReference type="EMBL" id="AF085279">
    <property type="protein sequence ID" value="AAD25940.1"/>
    <property type="status" value="ALT_INIT"/>
    <property type="molecule type" value="Genomic_DNA"/>
</dbReference>
<dbReference type="EMBL" id="AC007020">
    <property type="protein sequence ID" value="AAD25660.1"/>
    <property type="molecule type" value="Genomic_DNA"/>
</dbReference>
<dbReference type="EMBL" id="CP002685">
    <property type="protein sequence ID" value="AEC09802.1"/>
    <property type="molecule type" value="Genomic_DNA"/>
</dbReference>
<dbReference type="EMBL" id="DQ056573">
    <property type="protein sequence ID" value="AAY78723.1"/>
    <property type="molecule type" value="mRNA"/>
</dbReference>
<dbReference type="PIR" id="B84827">
    <property type="entry name" value="B84827"/>
</dbReference>
<dbReference type="RefSeq" id="NP_181554.1">
    <property type="nucleotide sequence ID" value="NM_129583.2"/>
</dbReference>
<dbReference type="SMR" id="Q9SIZ6"/>
<dbReference type="FunCoup" id="Q9SIZ6">
    <property type="interactions" value="100"/>
</dbReference>
<dbReference type="STRING" id="3702.Q9SIZ6"/>
<dbReference type="PaxDb" id="3702-AT2G40250.1"/>
<dbReference type="ProteomicsDB" id="247096"/>
<dbReference type="EnsemblPlants" id="AT2G40250.1">
    <property type="protein sequence ID" value="AT2G40250.1"/>
    <property type="gene ID" value="AT2G40250"/>
</dbReference>
<dbReference type="GeneID" id="818617"/>
<dbReference type="Gramene" id="AT2G40250.1">
    <property type="protein sequence ID" value="AT2G40250.1"/>
    <property type="gene ID" value="AT2G40250"/>
</dbReference>
<dbReference type="KEGG" id="ath:AT2G40250"/>
<dbReference type="Araport" id="AT2G40250"/>
<dbReference type="TAIR" id="AT2G40250"/>
<dbReference type="eggNOG" id="ENOG502QTDW">
    <property type="taxonomic scope" value="Eukaryota"/>
</dbReference>
<dbReference type="HOGENOM" id="CLU_015101_0_1_1"/>
<dbReference type="InParanoid" id="Q9SIZ6"/>
<dbReference type="OMA" id="HPPYGKS"/>
<dbReference type="OrthoDB" id="1600564at2759"/>
<dbReference type="PhylomeDB" id="Q9SIZ6"/>
<dbReference type="BioCyc" id="ARA:AT2G40250-MONOMER"/>
<dbReference type="PRO" id="PR:Q9SIZ6"/>
<dbReference type="Proteomes" id="UP000006548">
    <property type="component" value="Chromosome 2"/>
</dbReference>
<dbReference type="ExpressionAtlas" id="Q9SIZ6">
    <property type="expression patterns" value="baseline and differential"/>
</dbReference>
<dbReference type="GO" id="GO:0005576">
    <property type="term" value="C:extracellular region"/>
    <property type="evidence" value="ECO:0007669"/>
    <property type="project" value="UniProtKB-SubCell"/>
</dbReference>
<dbReference type="GO" id="GO:0016788">
    <property type="term" value="F:hydrolase activity, acting on ester bonds"/>
    <property type="evidence" value="ECO:0007669"/>
    <property type="project" value="InterPro"/>
</dbReference>
<dbReference type="GO" id="GO:0016042">
    <property type="term" value="P:lipid catabolic process"/>
    <property type="evidence" value="ECO:0007669"/>
    <property type="project" value="UniProtKB-KW"/>
</dbReference>
<dbReference type="CDD" id="cd01837">
    <property type="entry name" value="SGNH_plant_lipase_like"/>
    <property type="match status" value="1"/>
</dbReference>
<dbReference type="Gene3D" id="3.40.50.1110">
    <property type="entry name" value="SGNH hydrolase"/>
    <property type="match status" value="1"/>
</dbReference>
<dbReference type="InterPro" id="IPR001087">
    <property type="entry name" value="GDSL"/>
</dbReference>
<dbReference type="InterPro" id="IPR050592">
    <property type="entry name" value="GDSL_lipolytic_enzyme"/>
</dbReference>
<dbReference type="InterPro" id="IPR036514">
    <property type="entry name" value="SGNH_hydro_sf"/>
</dbReference>
<dbReference type="InterPro" id="IPR035669">
    <property type="entry name" value="SGNH_plant_lipase-like"/>
</dbReference>
<dbReference type="PANTHER" id="PTHR45642">
    <property type="entry name" value="GDSL ESTERASE/LIPASE EXL3"/>
    <property type="match status" value="1"/>
</dbReference>
<dbReference type="PANTHER" id="PTHR45642:SF139">
    <property type="entry name" value="SGNH HYDROLASE-TYPE ESTERASE DOMAIN-CONTAINING PROTEIN"/>
    <property type="match status" value="1"/>
</dbReference>
<dbReference type="Pfam" id="PF00657">
    <property type="entry name" value="Lipase_GDSL"/>
    <property type="match status" value="1"/>
</dbReference>
<dbReference type="SUPFAM" id="SSF52266">
    <property type="entry name" value="SGNH hydrolase"/>
    <property type="match status" value="1"/>
</dbReference>
<protein>
    <recommendedName>
        <fullName>GDSL esterase/lipase At2g40250</fullName>
        <ecNumber>3.1.1.-</ecNumber>
    </recommendedName>
    <alternativeName>
        <fullName>Extracellular lipase At2g40250</fullName>
    </alternativeName>
</protein>
<reference key="1">
    <citation type="journal article" date="1999" name="Genome Res.">
        <title>A cluster of ABA-regulated genes on Arabidopsis thaliana BAC T07M07.</title>
        <authorList>
            <person name="Wang M.L."/>
            <person name="Belmonte S."/>
            <person name="Kim U."/>
            <person name="Dolan M."/>
            <person name="Morris J.W."/>
            <person name="Goodman H.M."/>
        </authorList>
    </citation>
    <scope>NUCLEOTIDE SEQUENCE [GENOMIC DNA]</scope>
</reference>
<reference key="2">
    <citation type="journal article" date="1999" name="Nature">
        <title>Sequence and analysis of chromosome 2 of the plant Arabidopsis thaliana.</title>
        <authorList>
            <person name="Lin X."/>
            <person name="Kaul S."/>
            <person name="Rounsley S.D."/>
            <person name="Shea T.P."/>
            <person name="Benito M.-I."/>
            <person name="Town C.D."/>
            <person name="Fujii C.Y."/>
            <person name="Mason T.M."/>
            <person name="Bowman C.L."/>
            <person name="Barnstead M.E."/>
            <person name="Feldblyum T.V."/>
            <person name="Buell C.R."/>
            <person name="Ketchum K.A."/>
            <person name="Lee J.J."/>
            <person name="Ronning C.M."/>
            <person name="Koo H.L."/>
            <person name="Moffat K.S."/>
            <person name="Cronin L.A."/>
            <person name="Shen M."/>
            <person name="Pai G."/>
            <person name="Van Aken S."/>
            <person name="Umayam L."/>
            <person name="Tallon L.J."/>
            <person name="Gill J.E."/>
            <person name="Adams M.D."/>
            <person name="Carrera A.J."/>
            <person name="Creasy T.H."/>
            <person name="Goodman H.M."/>
            <person name="Somerville C.R."/>
            <person name="Copenhaver G.P."/>
            <person name="Preuss D."/>
            <person name="Nierman W.C."/>
            <person name="White O."/>
            <person name="Eisen J.A."/>
            <person name="Salzberg S.L."/>
            <person name="Fraser C.M."/>
            <person name="Venter J.C."/>
        </authorList>
    </citation>
    <scope>NUCLEOTIDE SEQUENCE [LARGE SCALE GENOMIC DNA]</scope>
    <source>
        <strain>cv. Columbia</strain>
    </source>
</reference>
<reference key="3">
    <citation type="journal article" date="2017" name="Plant J.">
        <title>Araport11: a complete reannotation of the Arabidopsis thaliana reference genome.</title>
        <authorList>
            <person name="Cheng C.Y."/>
            <person name="Krishnakumar V."/>
            <person name="Chan A.P."/>
            <person name="Thibaud-Nissen F."/>
            <person name="Schobel S."/>
            <person name="Town C.D."/>
        </authorList>
    </citation>
    <scope>GENOME REANNOTATION</scope>
    <source>
        <strain>cv. Columbia</strain>
    </source>
</reference>
<reference key="4">
    <citation type="journal article" date="2006" name="Plant Biotechnol. J.">
        <title>Simultaneous high-throughput recombinational cloning of open reading frames in closed and open configurations.</title>
        <authorList>
            <person name="Underwood B.A."/>
            <person name="Vanderhaeghen R."/>
            <person name="Whitford R."/>
            <person name="Town C.D."/>
            <person name="Hilson P."/>
        </authorList>
    </citation>
    <scope>NUCLEOTIDE SEQUENCE [LARGE SCALE MRNA]</scope>
    <source>
        <strain>cv. Columbia</strain>
    </source>
</reference>
<reference key="5">
    <citation type="journal article" date="2004" name="Prog. Lipid Res.">
        <title>GDSL family of serine esterases/lipases.</title>
        <authorList>
            <person name="Akoh C.C."/>
            <person name="Lee G.-C."/>
            <person name="Liaw Y.-C."/>
            <person name="Huang T.-H."/>
            <person name="Shaw J.-F."/>
        </authorList>
    </citation>
    <scope>REVIEW</scope>
</reference>
<reference key="6">
    <citation type="journal article" date="2008" name="Pak. J. Biol. Sci.">
        <title>Sequence analysis of GDSL lipase gene family in Arabidopsis thaliana.</title>
        <authorList>
            <person name="Ling H."/>
        </authorList>
    </citation>
    <scope>GENE FAMILY</scope>
</reference>
<name>GDL47_ARATH</name>
<evidence type="ECO:0000250" key="1"/>
<evidence type="ECO:0000255" key="2"/>
<evidence type="ECO:0000305" key="3"/>
<accession>Q9SIZ6</accession>
<accession>Q9SYT1</accession>